<evidence type="ECO:0000255" key="1">
    <source>
        <dbReference type="HAMAP-Rule" id="MF_01570"/>
    </source>
</evidence>
<proteinExistence type="inferred from homology"/>
<accession>Q2RU19</accession>
<organism>
    <name type="scientific">Rhodospirillum rubrum (strain ATCC 11170 / ATH 1.1.1 / DSM 467 / LMG 4362 / NCIMB 8255 / S1)</name>
    <dbReference type="NCBI Taxonomy" id="269796"/>
    <lineage>
        <taxon>Bacteria</taxon>
        <taxon>Pseudomonadati</taxon>
        <taxon>Pseudomonadota</taxon>
        <taxon>Alphaproteobacteria</taxon>
        <taxon>Rhodospirillales</taxon>
        <taxon>Rhodospirillaceae</taxon>
        <taxon>Rhodospirillum</taxon>
    </lineage>
</organism>
<feature type="chain" id="PRO_0000248912" description="Proline--tRNA ligase">
    <location>
        <begin position="1"/>
        <end position="435"/>
    </location>
</feature>
<name>SYP_RHORT</name>
<protein>
    <recommendedName>
        <fullName evidence="1">Proline--tRNA ligase</fullName>
        <ecNumber evidence="1">6.1.1.15</ecNumber>
    </recommendedName>
    <alternativeName>
        <fullName evidence="1">Prolyl-tRNA synthetase</fullName>
        <shortName evidence="1">ProRS</shortName>
    </alternativeName>
</protein>
<keyword id="KW-0030">Aminoacyl-tRNA synthetase</keyword>
<keyword id="KW-0067">ATP-binding</keyword>
<keyword id="KW-0963">Cytoplasm</keyword>
<keyword id="KW-0436">Ligase</keyword>
<keyword id="KW-0547">Nucleotide-binding</keyword>
<keyword id="KW-0648">Protein biosynthesis</keyword>
<keyword id="KW-1185">Reference proteome</keyword>
<gene>
    <name evidence="1" type="primary">proS</name>
    <name type="ordered locus">Rru_A1576</name>
</gene>
<reference key="1">
    <citation type="journal article" date="2011" name="Stand. Genomic Sci.">
        <title>Complete genome sequence of Rhodospirillum rubrum type strain (S1).</title>
        <authorList>
            <person name="Munk A.C."/>
            <person name="Copeland A."/>
            <person name="Lucas S."/>
            <person name="Lapidus A."/>
            <person name="Del Rio T.G."/>
            <person name="Barry K."/>
            <person name="Detter J.C."/>
            <person name="Hammon N."/>
            <person name="Israni S."/>
            <person name="Pitluck S."/>
            <person name="Brettin T."/>
            <person name="Bruce D."/>
            <person name="Han C."/>
            <person name="Tapia R."/>
            <person name="Gilna P."/>
            <person name="Schmutz J."/>
            <person name="Larimer F."/>
            <person name="Land M."/>
            <person name="Kyrpides N.C."/>
            <person name="Mavromatis K."/>
            <person name="Richardson P."/>
            <person name="Rohde M."/>
            <person name="Goeker M."/>
            <person name="Klenk H.P."/>
            <person name="Zhang Y."/>
            <person name="Roberts G.P."/>
            <person name="Reslewic S."/>
            <person name="Schwartz D.C."/>
        </authorList>
    </citation>
    <scope>NUCLEOTIDE SEQUENCE [LARGE SCALE GENOMIC DNA]</scope>
    <source>
        <strain>ATCC 11170 / ATH 1.1.1 / DSM 467 / LMG 4362 / NCIMB 8255 / S1</strain>
    </source>
</reference>
<sequence>MRLSRFLLPTLKETPSEAEIVSHRLMLRAGMIRQHASGIYNWLPLGLRVLRKIEQVVREEQDATGAQEILMPTIQSADLWRESGRYDDYGKEMLRIVDRHERDMLYGPTHEEVATDVFRKNVKSYRALPQNLYQIQWKFRDEVRPRFGVMRGREFLMKDNYSFDLTYEGARHSYNKMFVAYLRTFARLGLKAIPMAADTGPIGGKLSHEFIILADTGESAVFCHRDLLDKPAPENVDYDSDLQPLVDSWTSLYAATDEMHRPDHGVPEGDLVSARGIEVGHIFHFGTKYSAPMGATVTAPDGSSQAVFMGSYGIGVSRLVAGIIEASHDDNGIIWPDGVAPFDIGVINLKVGDAATDGVCADLYGRLRAAGKDVLFDDTDDRAGAKFATMDLIGLPWQVIAGPKGVAKGMVELKERATGERHELSIDSALAKLLG</sequence>
<comment type="function">
    <text evidence="1">Catalyzes the attachment of proline to tRNA(Pro) in a two-step reaction: proline is first activated by ATP to form Pro-AMP and then transferred to the acceptor end of tRNA(Pro).</text>
</comment>
<comment type="catalytic activity">
    <reaction evidence="1">
        <text>tRNA(Pro) + L-proline + ATP = L-prolyl-tRNA(Pro) + AMP + diphosphate</text>
        <dbReference type="Rhea" id="RHEA:14305"/>
        <dbReference type="Rhea" id="RHEA-COMP:9700"/>
        <dbReference type="Rhea" id="RHEA-COMP:9702"/>
        <dbReference type="ChEBI" id="CHEBI:30616"/>
        <dbReference type="ChEBI" id="CHEBI:33019"/>
        <dbReference type="ChEBI" id="CHEBI:60039"/>
        <dbReference type="ChEBI" id="CHEBI:78442"/>
        <dbReference type="ChEBI" id="CHEBI:78532"/>
        <dbReference type="ChEBI" id="CHEBI:456215"/>
        <dbReference type="EC" id="6.1.1.15"/>
    </reaction>
</comment>
<comment type="subunit">
    <text evidence="1">Homodimer.</text>
</comment>
<comment type="subcellular location">
    <subcellularLocation>
        <location evidence="1">Cytoplasm</location>
    </subcellularLocation>
</comment>
<comment type="similarity">
    <text evidence="1">Belongs to the class-II aminoacyl-tRNA synthetase family. ProS type 2 subfamily.</text>
</comment>
<dbReference type="EC" id="6.1.1.15" evidence="1"/>
<dbReference type="EMBL" id="CP000230">
    <property type="protein sequence ID" value="ABC22376.1"/>
    <property type="molecule type" value="Genomic_DNA"/>
</dbReference>
<dbReference type="RefSeq" id="WP_011389451.1">
    <property type="nucleotide sequence ID" value="NC_007643.1"/>
</dbReference>
<dbReference type="RefSeq" id="YP_426663.1">
    <property type="nucleotide sequence ID" value="NC_007643.1"/>
</dbReference>
<dbReference type="SMR" id="Q2RU19"/>
<dbReference type="STRING" id="269796.Rru_A1576"/>
<dbReference type="EnsemblBacteria" id="ABC22376">
    <property type="protein sequence ID" value="ABC22376"/>
    <property type="gene ID" value="Rru_A1576"/>
</dbReference>
<dbReference type="KEGG" id="rru:Rru_A1576"/>
<dbReference type="PATRIC" id="fig|269796.9.peg.1649"/>
<dbReference type="eggNOG" id="COG0442">
    <property type="taxonomic scope" value="Bacteria"/>
</dbReference>
<dbReference type="HOGENOM" id="CLU_016739_4_2_5"/>
<dbReference type="PhylomeDB" id="Q2RU19"/>
<dbReference type="Proteomes" id="UP000001929">
    <property type="component" value="Chromosome"/>
</dbReference>
<dbReference type="GO" id="GO:0005829">
    <property type="term" value="C:cytosol"/>
    <property type="evidence" value="ECO:0007669"/>
    <property type="project" value="TreeGrafter"/>
</dbReference>
<dbReference type="GO" id="GO:0005524">
    <property type="term" value="F:ATP binding"/>
    <property type="evidence" value="ECO:0007669"/>
    <property type="project" value="UniProtKB-UniRule"/>
</dbReference>
<dbReference type="GO" id="GO:0004827">
    <property type="term" value="F:proline-tRNA ligase activity"/>
    <property type="evidence" value="ECO:0007669"/>
    <property type="project" value="UniProtKB-UniRule"/>
</dbReference>
<dbReference type="GO" id="GO:0006433">
    <property type="term" value="P:prolyl-tRNA aminoacylation"/>
    <property type="evidence" value="ECO:0007669"/>
    <property type="project" value="UniProtKB-UniRule"/>
</dbReference>
<dbReference type="CDD" id="cd00861">
    <property type="entry name" value="ProRS_anticodon_short"/>
    <property type="match status" value="1"/>
</dbReference>
<dbReference type="CDD" id="cd00779">
    <property type="entry name" value="ProRS_core_prok"/>
    <property type="match status" value="1"/>
</dbReference>
<dbReference type="FunFam" id="3.30.930.10:FF:000042">
    <property type="entry name" value="probable proline--tRNA ligase, mitochondrial"/>
    <property type="match status" value="1"/>
</dbReference>
<dbReference type="FunFam" id="3.40.50.800:FF:000032">
    <property type="entry name" value="Proline--tRNA ligase"/>
    <property type="match status" value="1"/>
</dbReference>
<dbReference type="Gene3D" id="3.40.50.800">
    <property type="entry name" value="Anticodon-binding domain"/>
    <property type="match status" value="1"/>
</dbReference>
<dbReference type="Gene3D" id="3.30.930.10">
    <property type="entry name" value="Bira Bifunctional Protein, Domain 2"/>
    <property type="match status" value="1"/>
</dbReference>
<dbReference type="HAMAP" id="MF_01570">
    <property type="entry name" value="Pro_tRNA_synth_type2"/>
    <property type="match status" value="1"/>
</dbReference>
<dbReference type="InterPro" id="IPR002314">
    <property type="entry name" value="aa-tRNA-synt_IIb"/>
</dbReference>
<dbReference type="InterPro" id="IPR006195">
    <property type="entry name" value="aa-tRNA-synth_II"/>
</dbReference>
<dbReference type="InterPro" id="IPR045864">
    <property type="entry name" value="aa-tRNA-synth_II/BPL/LPL"/>
</dbReference>
<dbReference type="InterPro" id="IPR004154">
    <property type="entry name" value="Anticodon-bd"/>
</dbReference>
<dbReference type="InterPro" id="IPR036621">
    <property type="entry name" value="Anticodon-bd_dom_sf"/>
</dbReference>
<dbReference type="InterPro" id="IPR002316">
    <property type="entry name" value="Pro-tRNA-ligase_IIa"/>
</dbReference>
<dbReference type="InterPro" id="IPR004500">
    <property type="entry name" value="Pro-tRNA-synth_IIa_bac-type"/>
</dbReference>
<dbReference type="InterPro" id="IPR050062">
    <property type="entry name" value="Pro-tRNA_synthetase"/>
</dbReference>
<dbReference type="InterPro" id="IPR023716">
    <property type="entry name" value="Prolyl-tRNA_ligase_IIa_type2"/>
</dbReference>
<dbReference type="InterPro" id="IPR044140">
    <property type="entry name" value="ProRS_anticodon_short"/>
</dbReference>
<dbReference type="InterPro" id="IPR033730">
    <property type="entry name" value="ProRS_core_prok"/>
</dbReference>
<dbReference type="NCBIfam" id="NF008979">
    <property type="entry name" value="PRK12325.1"/>
    <property type="match status" value="1"/>
</dbReference>
<dbReference type="NCBIfam" id="TIGR00409">
    <property type="entry name" value="proS_fam_II"/>
    <property type="match status" value="1"/>
</dbReference>
<dbReference type="PANTHER" id="PTHR42753">
    <property type="entry name" value="MITOCHONDRIAL RIBOSOME PROTEIN L39/PROLYL-TRNA LIGASE FAMILY MEMBER"/>
    <property type="match status" value="1"/>
</dbReference>
<dbReference type="PANTHER" id="PTHR42753:SF2">
    <property type="entry name" value="PROLINE--TRNA LIGASE"/>
    <property type="match status" value="1"/>
</dbReference>
<dbReference type="Pfam" id="PF03129">
    <property type="entry name" value="HGTP_anticodon"/>
    <property type="match status" value="1"/>
</dbReference>
<dbReference type="Pfam" id="PF00587">
    <property type="entry name" value="tRNA-synt_2b"/>
    <property type="match status" value="1"/>
</dbReference>
<dbReference type="PRINTS" id="PR01046">
    <property type="entry name" value="TRNASYNTHPRO"/>
</dbReference>
<dbReference type="SUPFAM" id="SSF52954">
    <property type="entry name" value="Class II aaRS ABD-related"/>
    <property type="match status" value="1"/>
</dbReference>
<dbReference type="SUPFAM" id="SSF55681">
    <property type="entry name" value="Class II aaRS and biotin synthetases"/>
    <property type="match status" value="1"/>
</dbReference>
<dbReference type="PROSITE" id="PS50862">
    <property type="entry name" value="AA_TRNA_LIGASE_II"/>
    <property type="match status" value="1"/>
</dbReference>